<reference key="1">
    <citation type="journal article" date="1990" name="J. Biol. Chem.">
        <title>Molecular biology of carbon-phosphorus bond cleavage. Cloning and sequencing of the phn (psiD) genes involved in alkylphosphonate uptake and C-P lyase activity in Escherichia coli B.</title>
        <authorList>
            <person name="Chen C.-M."/>
            <person name="Ye Q.-Z."/>
            <person name="Zhu Z."/>
            <person name="Wanner B.L."/>
            <person name="Walsh C.T."/>
        </authorList>
    </citation>
    <scope>NUCLEOTIDE SEQUENCE [GENOMIC DNA]</scope>
    <source>
        <strain>B</strain>
    </source>
</reference>
<reference key="2">
    <citation type="journal article" date="1991" name="J. Bacteriol.">
        <title>Molecular analysis of the cryptic and functional phn operons for phosphonate use in Escherichia coli K-12.</title>
        <authorList>
            <person name="Makino K."/>
            <person name="Kim S.K."/>
            <person name="Shinagawa H."/>
            <person name="Amemura M."/>
            <person name="Nakata A."/>
        </authorList>
    </citation>
    <scope>NUCLEOTIDE SEQUENCE [GENOMIC DNA]</scope>
    <source>
        <strain>K12</strain>
    </source>
</reference>
<reference key="3">
    <citation type="journal article" date="1995" name="Nucleic Acids Res.">
        <title>Analysis of the Escherichia coli genome VI: DNA sequence of the region from 92.8 through 100 minutes.</title>
        <authorList>
            <person name="Burland V.D."/>
            <person name="Plunkett G. III"/>
            <person name="Sofia H.J."/>
            <person name="Daniels D.L."/>
            <person name="Blattner F.R."/>
        </authorList>
    </citation>
    <scope>NUCLEOTIDE SEQUENCE [LARGE SCALE GENOMIC DNA]</scope>
    <source>
        <strain>K12 / MG1655 / ATCC 47076</strain>
    </source>
</reference>
<reference key="4">
    <citation type="journal article" date="1997" name="Science">
        <title>The complete genome sequence of Escherichia coli K-12.</title>
        <authorList>
            <person name="Blattner F.R."/>
            <person name="Plunkett G. III"/>
            <person name="Bloch C.A."/>
            <person name="Perna N.T."/>
            <person name="Burland V."/>
            <person name="Riley M."/>
            <person name="Collado-Vides J."/>
            <person name="Glasner J.D."/>
            <person name="Rode C.K."/>
            <person name="Mayhew G.F."/>
            <person name="Gregor J."/>
            <person name="Davis N.W."/>
            <person name="Kirkpatrick H.A."/>
            <person name="Goeden M.A."/>
            <person name="Rose D.J."/>
            <person name="Mau B."/>
            <person name="Shao Y."/>
        </authorList>
    </citation>
    <scope>NUCLEOTIDE SEQUENCE [LARGE SCALE GENOMIC DNA]</scope>
    <source>
        <strain>K12 / MG1655 / ATCC 47076</strain>
    </source>
</reference>
<reference key="5">
    <citation type="journal article" date="2006" name="Mol. Syst. Biol.">
        <title>Highly accurate genome sequences of Escherichia coli K-12 strains MG1655 and W3110.</title>
        <authorList>
            <person name="Hayashi K."/>
            <person name="Morooka N."/>
            <person name="Yamamoto Y."/>
            <person name="Fujita K."/>
            <person name="Isono K."/>
            <person name="Choi S."/>
            <person name="Ohtsubo E."/>
            <person name="Baba T."/>
            <person name="Wanner B.L."/>
            <person name="Mori H."/>
            <person name="Horiuchi T."/>
        </authorList>
    </citation>
    <scope>NUCLEOTIDE SEQUENCE [LARGE SCALE GENOMIC DNA]</scope>
    <source>
        <strain>K12 / W3110 / ATCC 27325 / DSM 5911</strain>
    </source>
</reference>
<reference key="6">
    <citation type="journal article" date="2011" name="Nature">
        <title>Intermediates in the transformation of phosphonates to phosphate by bacteria.</title>
        <authorList>
            <person name="Kamat S.S."/>
            <person name="Williams H.J."/>
            <person name="Raushel F.M."/>
        </authorList>
    </citation>
    <scope>FUNCTION</scope>
    <scope>CATALYTIC ACTIVITY</scope>
    <scope>COFACTOR</scope>
    <source>
        <strain>K12 / MG1655 / ATCC 47076</strain>
    </source>
</reference>
<reference key="7">
    <citation type="journal article" date="2011" name="Proc. Natl. Acad. Sci. U.S.A.">
        <title>Five phosphonate operon gene products as components of a multi-subunit complex of the carbon-phosphorus lyase pathway.</title>
        <authorList>
            <person name="Jochimsen B."/>
            <person name="Lolle S."/>
            <person name="McSorley F.R."/>
            <person name="Nabi M."/>
            <person name="Stougaard J."/>
            <person name="Zechel D.L."/>
            <person name="Hove-Jensen B."/>
        </authorList>
    </citation>
    <scope>SUBUNIT</scope>
    <source>
        <strain>K12</strain>
    </source>
</reference>
<proteinExistence type="evidence at protein level"/>
<sequence>MANLSGYNFAYLDEQTKRMIRRAILKAVAIPGYQVPFGGREMPMPYGWGTGGIQLTASVIGESDVLKVIDQGADDTTNAVSIRNFFKRVTGVNTTERTDDATVIQTRHRIPETPLTEDQIIIFQVPIPEPLRFIEPRETETRTMHALEEYGVMQVKLYEDIARFGHIATTYAYPVKVNGRYVMDPSPIPKFDNPKMDMMPALQLFGAGREKRIYAVPPFTRVESLDFDDHPFTVQQWDEPCAICGSTHSYLDEVVLDDAGNRMFVCSDTDYCRQQSEAKNQ</sequence>
<comment type="function">
    <text evidence="2">Catalyzes the breakage of the C-P bond in alpha-D-ribose 1-methylphosphonate 5-phosphate (PRPn) forming alpha-D-ribose 1,2-cyclic phosphate 5-phosphate (PRcP).</text>
</comment>
<comment type="catalytic activity">
    <reaction evidence="2">
        <text>alpha-D-ribose 1-methylphosphonate 5-phosphate + AH2 + S-adenosyl-L-methionine = alpha-D-ribose 1,2-cyclic phosphate 5-phosphate + methane + 5'-deoxyadenosine + L-methionine + A + H(+)</text>
        <dbReference type="Rhea" id="RHEA:34707"/>
        <dbReference type="ChEBI" id="CHEBI:13193"/>
        <dbReference type="ChEBI" id="CHEBI:15378"/>
        <dbReference type="ChEBI" id="CHEBI:16183"/>
        <dbReference type="ChEBI" id="CHEBI:17319"/>
        <dbReference type="ChEBI" id="CHEBI:17499"/>
        <dbReference type="ChEBI" id="CHEBI:57844"/>
        <dbReference type="ChEBI" id="CHEBI:59789"/>
        <dbReference type="ChEBI" id="CHEBI:68686"/>
        <dbReference type="ChEBI" id="CHEBI:68687"/>
        <dbReference type="EC" id="4.7.1.1"/>
    </reaction>
</comment>
<comment type="cofactor">
    <cofactor evidence="2">
        <name>[4Fe-4S] cluster</name>
        <dbReference type="ChEBI" id="CHEBI:49883"/>
    </cofactor>
    <text evidence="2">Binds 1 [4Fe-4S] cluster per subunit.</text>
</comment>
<comment type="subunit">
    <text evidence="1">Forms a complex with PhnG, PhnH, PhnI and PhnK with the suggested composition PhnG(4)H(2)I(2)J(2)K.</text>
</comment>
<comment type="miscellaneous">
    <text>The sequence shown is that of strain K12.</text>
</comment>
<comment type="similarity">
    <text evidence="3">Belongs to the PhnJ family.</text>
</comment>
<keyword id="KW-0002">3D-structure</keyword>
<keyword id="KW-0004">4Fe-4S</keyword>
<keyword id="KW-0408">Iron</keyword>
<keyword id="KW-0411">Iron-sulfur</keyword>
<keyword id="KW-0456">Lyase</keyword>
<keyword id="KW-0479">Metal-binding</keyword>
<keyword id="KW-1185">Reference proteome</keyword>
<keyword id="KW-0949">S-adenosyl-L-methionine</keyword>
<evidence type="ECO:0000269" key="1">
    <source>
    </source>
</evidence>
<evidence type="ECO:0000269" key="2">
    <source>
    </source>
</evidence>
<evidence type="ECO:0000305" key="3"/>
<evidence type="ECO:0007829" key="4">
    <source>
        <dbReference type="PDB" id="4XB6"/>
    </source>
</evidence>
<evidence type="ECO:0007829" key="5">
    <source>
        <dbReference type="PDB" id="7Z18"/>
    </source>
</evidence>
<accession>P16688</accession>
<accession>Q2M6K5</accession>
<protein>
    <recommendedName>
        <fullName>Alpha-D-ribose 1-methylphosphonate 5-phosphate C-P lyase</fullName>
        <shortName>PRPn C-P lyase</shortName>
        <ecNumber evidence="2">4.7.1.1</ecNumber>
    </recommendedName>
</protein>
<gene>
    <name type="primary">phnJ</name>
    <name type="ordered locus">b4098</name>
    <name type="ordered locus">JW4059</name>
</gene>
<dbReference type="EC" id="4.7.1.1" evidence="2"/>
<dbReference type="EMBL" id="J05260">
    <property type="protein sequence ID" value="AAA24348.1"/>
    <property type="molecule type" value="Genomic_DNA"/>
</dbReference>
<dbReference type="EMBL" id="D90227">
    <property type="protein sequence ID" value="BAA14270.1"/>
    <property type="molecule type" value="Genomic_DNA"/>
</dbReference>
<dbReference type="EMBL" id="U14003">
    <property type="protein sequence ID" value="AAA96997.1"/>
    <property type="molecule type" value="Genomic_DNA"/>
</dbReference>
<dbReference type="EMBL" id="U00096">
    <property type="protein sequence ID" value="AAC77059.1"/>
    <property type="molecule type" value="Genomic_DNA"/>
</dbReference>
<dbReference type="EMBL" id="AP009048">
    <property type="protein sequence ID" value="BAE78101.1"/>
    <property type="molecule type" value="Genomic_DNA"/>
</dbReference>
<dbReference type="PIR" id="A65219">
    <property type="entry name" value="A65219"/>
</dbReference>
<dbReference type="RefSeq" id="NP_418522.1">
    <property type="nucleotide sequence ID" value="NC_000913.3"/>
</dbReference>
<dbReference type="RefSeq" id="WP_000002303.1">
    <property type="nucleotide sequence ID" value="NZ_SSZK01000016.1"/>
</dbReference>
<dbReference type="PDB" id="4XB6">
    <property type="method" value="X-ray"/>
    <property type="resolution" value="1.70 A"/>
    <property type="chains" value="D/H=1-281"/>
</dbReference>
<dbReference type="PDB" id="7Z15">
    <property type="method" value="EM"/>
    <property type="resolution" value="1.93 A"/>
    <property type="chains" value="D/H=1-281"/>
</dbReference>
<dbReference type="PDB" id="7Z16">
    <property type="method" value="EM"/>
    <property type="resolution" value="2.09 A"/>
    <property type="chains" value="D/H=1-281"/>
</dbReference>
<dbReference type="PDB" id="7Z17">
    <property type="method" value="EM"/>
    <property type="resolution" value="2.57 A"/>
    <property type="chains" value="D/H=1-281"/>
</dbReference>
<dbReference type="PDB" id="7Z18">
    <property type="method" value="EM"/>
    <property type="resolution" value="1.98 A"/>
    <property type="chains" value="D/H=1-281"/>
</dbReference>
<dbReference type="PDB" id="7Z19">
    <property type="method" value="EM"/>
    <property type="resolution" value="2.57 A"/>
    <property type="chains" value="D/H=1-281"/>
</dbReference>
<dbReference type="PDBsum" id="4XB6"/>
<dbReference type="PDBsum" id="7Z15"/>
<dbReference type="PDBsum" id="7Z16"/>
<dbReference type="PDBsum" id="7Z17"/>
<dbReference type="PDBsum" id="7Z18"/>
<dbReference type="PDBsum" id="7Z19"/>
<dbReference type="EMDB" id="EMD-14441"/>
<dbReference type="EMDB" id="EMD-14443"/>
<dbReference type="EMDB" id="EMD-14444"/>
<dbReference type="EMDB" id="EMD-14445"/>
<dbReference type="SMR" id="P16688"/>
<dbReference type="BioGRID" id="4263382">
    <property type="interactions" value="12"/>
</dbReference>
<dbReference type="ComplexPortal" id="CPX-1929">
    <property type="entry name" value="PhnGHIJKL complex"/>
</dbReference>
<dbReference type="DIP" id="DIP-10489N"/>
<dbReference type="FunCoup" id="P16688">
    <property type="interactions" value="41"/>
</dbReference>
<dbReference type="IntAct" id="P16688">
    <property type="interactions" value="4"/>
</dbReference>
<dbReference type="STRING" id="511145.b4098"/>
<dbReference type="PaxDb" id="511145-b4098"/>
<dbReference type="EnsemblBacteria" id="AAC77059">
    <property type="protein sequence ID" value="AAC77059"/>
    <property type="gene ID" value="b4098"/>
</dbReference>
<dbReference type="GeneID" id="948606"/>
<dbReference type="KEGG" id="ecj:JW4059"/>
<dbReference type="KEGG" id="eco:b4098"/>
<dbReference type="KEGG" id="ecoc:C3026_22150"/>
<dbReference type="PATRIC" id="fig|1411691.4.peg.2602"/>
<dbReference type="EchoBASE" id="EB0713"/>
<dbReference type="eggNOG" id="COG3627">
    <property type="taxonomic scope" value="Bacteria"/>
</dbReference>
<dbReference type="HOGENOM" id="CLU_063386_0_0_6"/>
<dbReference type="InParanoid" id="P16688"/>
<dbReference type="OMA" id="MVYQVPI"/>
<dbReference type="OrthoDB" id="9803851at2"/>
<dbReference type="PhylomeDB" id="P16688"/>
<dbReference type="BioCyc" id="EcoCyc:EG10719-MONOMER"/>
<dbReference type="BioCyc" id="MetaCyc:EG10719-MONOMER"/>
<dbReference type="BRENDA" id="4.7.1.1">
    <property type="organism ID" value="2026"/>
</dbReference>
<dbReference type="EvolutionaryTrace" id="P16688"/>
<dbReference type="PRO" id="PR:P16688"/>
<dbReference type="Proteomes" id="UP000000625">
    <property type="component" value="Chromosome"/>
</dbReference>
<dbReference type="GO" id="GO:0061694">
    <property type="term" value="C:alpha-D-ribose 1-methylphosphonate 5-triphosphate synthase complex"/>
    <property type="evidence" value="ECO:0000353"/>
    <property type="project" value="ComplexPortal"/>
</dbReference>
<dbReference type="GO" id="GO:1904176">
    <property type="term" value="C:carbon phosphorus lyase complex"/>
    <property type="evidence" value="ECO:0000314"/>
    <property type="project" value="EcoCyc"/>
</dbReference>
<dbReference type="GO" id="GO:0051539">
    <property type="term" value="F:4 iron, 4 sulfur cluster binding"/>
    <property type="evidence" value="ECO:0000314"/>
    <property type="project" value="EcoCyc"/>
</dbReference>
<dbReference type="GO" id="GO:0098848">
    <property type="term" value="F:alpha-D-ribose 1-methylphosphonate 5-phosphate C-P-lyase activity"/>
    <property type="evidence" value="ECO:0000314"/>
    <property type="project" value="EcoCyc"/>
</dbReference>
<dbReference type="GO" id="GO:0016829">
    <property type="term" value="F:lyase activity"/>
    <property type="evidence" value="ECO:0000314"/>
    <property type="project" value="EcoCyc"/>
</dbReference>
<dbReference type="GO" id="GO:0046872">
    <property type="term" value="F:metal ion binding"/>
    <property type="evidence" value="ECO:0007669"/>
    <property type="project" value="UniProtKB-KW"/>
</dbReference>
<dbReference type="GO" id="GO:0019700">
    <property type="term" value="P:organic phosphonate catabolic process"/>
    <property type="evidence" value="ECO:0000315"/>
    <property type="project" value="EcoCyc"/>
</dbReference>
<dbReference type="GO" id="GO:0019634">
    <property type="term" value="P:organic phosphonate metabolic process"/>
    <property type="evidence" value="ECO:0000314"/>
    <property type="project" value="ComplexPortal"/>
</dbReference>
<dbReference type="GO" id="GO:0015716">
    <property type="term" value="P:organic phosphonate transport"/>
    <property type="evidence" value="ECO:0000314"/>
    <property type="project" value="ComplexPortal"/>
</dbReference>
<dbReference type="InterPro" id="IPR010306">
    <property type="entry name" value="PhnJ"/>
</dbReference>
<dbReference type="Pfam" id="PF06007">
    <property type="entry name" value="PhnJ"/>
    <property type="match status" value="1"/>
</dbReference>
<dbReference type="PIRSF" id="PIRSF011468">
    <property type="entry name" value="PhnJ"/>
    <property type="match status" value="1"/>
</dbReference>
<dbReference type="SFLD" id="SFLDF00379">
    <property type="entry name" value="Phosphonate_metabolism_(PhnJ)"/>
    <property type="match status" value="1"/>
</dbReference>
<dbReference type="SFLD" id="SFLDG01115">
    <property type="entry name" value="Phosphonate_metabolism_(PhnJ)"/>
    <property type="match status" value="1"/>
</dbReference>
<dbReference type="SFLD" id="SFLDS00033">
    <property type="entry name" value="Radical_SAM_Phosphonate_Metabo"/>
    <property type="match status" value="1"/>
</dbReference>
<organism>
    <name type="scientific">Escherichia coli (strain K12)</name>
    <dbReference type="NCBI Taxonomy" id="83333"/>
    <lineage>
        <taxon>Bacteria</taxon>
        <taxon>Pseudomonadati</taxon>
        <taxon>Pseudomonadota</taxon>
        <taxon>Gammaproteobacteria</taxon>
        <taxon>Enterobacterales</taxon>
        <taxon>Enterobacteriaceae</taxon>
        <taxon>Escherichia</taxon>
    </lineage>
</organism>
<feature type="chain" id="PRO_0000058397" description="Alpha-D-ribose 1-methylphosphonate 5-phosphate C-P lyase">
    <location>
        <begin position="1"/>
        <end position="281"/>
    </location>
</feature>
<feature type="sequence variant" description="In strain: B.">
    <original>V</original>
    <variation>L</variation>
    <location>
        <position position="103"/>
    </location>
</feature>
<feature type="strand" evidence="4">
    <location>
        <begin position="5"/>
        <end position="8"/>
    </location>
</feature>
<feature type="helix" evidence="5">
    <location>
        <begin position="9"/>
        <end position="11"/>
    </location>
</feature>
<feature type="helix" evidence="4">
    <location>
        <begin position="14"/>
        <end position="29"/>
    </location>
</feature>
<feature type="helix" evidence="4">
    <location>
        <begin position="50"/>
        <end position="59"/>
    </location>
</feature>
<feature type="strand" evidence="4">
    <location>
        <begin position="65"/>
        <end position="70"/>
    </location>
</feature>
<feature type="helix" evidence="4">
    <location>
        <begin position="77"/>
        <end position="90"/>
    </location>
</feature>
<feature type="helix" evidence="4">
    <location>
        <begin position="98"/>
        <end position="100"/>
    </location>
</feature>
<feature type="strand" evidence="4">
    <location>
        <begin position="102"/>
        <end position="108"/>
    </location>
</feature>
<feature type="strand" evidence="4">
    <location>
        <begin position="120"/>
        <end position="124"/>
    </location>
</feature>
<feature type="turn" evidence="4">
    <location>
        <begin position="130"/>
        <end position="134"/>
    </location>
</feature>
<feature type="helix" evidence="4">
    <location>
        <begin position="138"/>
        <end position="147"/>
    </location>
</feature>
<feature type="helix" evidence="4">
    <location>
        <begin position="151"/>
        <end position="164"/>
    </location>
</feature>
<feature type="strand" evidence="4">
    <location>
        <begin position="175"/>
        <end position="177"/>
    </location>
</feature>
<feature type="turn" evidence="4">
    <location>
        <begin position="178"/>
        <end position="180"/>
    </location>
</feature>
<feature type="strand" evidence="4">
    <location>
        <begin position="181"/>
        <end position="183"/>
    </location>
</feature>
<feature type="helix" evidence="4">
    <location>
        <begin position="190"/>
        <end position="196"/>
    </location>
</feature>
<feature type="strand" evidence="4">
    <location>
        <begin position="200"/>
        <end position="207"/>
    </location>
</feature>
<feature type="turn" evidence="4">
    <location>
        <begin position="208"/>
        <end position="211"/>
    </location>
</feature>
<feature type="strand" evidence="4">
    <location>
        <begin position="212"/>
        <end position="216"/>
    </location>
</feature>
<feature type="strand" evidence="4">
    <location>
        <begin position="222"/>
        <end position="224"/>
    </location>
</feature>
<feature type="strand" evidence="4">
    <location>
        <begin position="228"/>
        <end position="230"/>
    </location>
</feature>
<feature type="turn" evidence="4">
    <location>
        <begin position="242"/>
        <end position="244"/>
    </location>
</feature>
<feature type="strand" evidence="4">
    <location>
        <begin position="247"/>
        <end position="249"/>
    </location>
</feature>
<feature type="strand" evidence="4">
    <location>
        <begin position="251"/>
        <end position="255"/>
    </location>
</feature>
<feature type="strand" evidence="4">
    <location>
        <begin position="257"/>
        <end position="260"/>
    </location>
</feature>
<feature type="strand" evidence="4">
    <location>
        <begin position="262"/>
        <end position="268"/>
    </location>
</feature>
<feature type="helix" evidence="4">
    <location>
        <begin position="269"/>
        <end position="277"/>
    </location>
</feature>
<name>PHNJ_ECOLI</name>